<organism>
    <name type="scientific">Escherichia coli O157:H7</name>
    <dbReference type="NCBI Taxonomy" id="83334"/>
    <lineage>
        <taxon>Bacteria</taxon>
        <taxon>Pseudomonadati</taxon>
        <taxon>Pseudomonadota</taxon>
        <taxon>Gammaproteobacteria</taxon>
        <taxon>Enterobacterales</taxon>
        <taxon>Enterobacteriaceae</taxon>
        <taxon>Escherichia</taxon>
    </lineage>
</organism>
<accession>Q8X900</accession>
<feature type="chain" id="PRO_0000192526" description="Glutamate--cysteine ligase">
    <location>
        <begin position="1"/>
        <end position="518"/>
    </location>
</feature>
<sequence length="518" mass="58255">MIPDVSQALAWLEKHPQALKGIQRGLERETLRVNADGTLATTGHPEALGSALTHKWITTDFAEALLEFITPVDGDIEHMLTFMRDLHRYTARNMGDERMWPLSMPCYIAEGQDIELAQYGTSNTGRFKTLYREGLKNRYGALMQTISGVHYNFSLPMAFWQAKCGDISGADAKEKISAGYFRVIRNYYRFGWVIPYLFGASPAICSSFLQGKPTSLPFEKTECGMYYLPYATSLRLSDLGYTNKSQSNLGITFNDLYEYVAGLKQAIKTPSEEYAKIGIDKDGKRLQINSNVLQIENELYAPIRPKRVTRSGESPSDALLRGGIEYIEVRSLDINPFSPIGVDEQQVRFLDLFMVWCALADAPEMSSSELACTRVNWNRVILEGRKPGLTLGIGCETAQFPLPQVGKDLFRDLKRVAQTLDSINGGEAYQKVCDELVACFDNPDLTFSARILRSMIDTGIGGTGKAFAEAYRNLLREEPLEILREEDFVAEREASERRQQEMEAADTEPFAVWLEKHA</sequence>
<name>GSH1_ECO57</name>
<proteinExistence type="inferred from homology"/>
<reference key="1">
    <citation type="journal article" date="2001" name="Nature">
        <title>Genome sequence of enterohaemorrhagic Escherichia coli O157:H7.</title>
        <authorList>
            <person name="Perna N.T."/>
            <person name="Plunkett G. III"/>
            <person name="Burland V."/>
            <person name="Mau B."/>
            <person name="Glasner J.D."/>
            <person name="Rose D.J."/>
            <person name="Mayhew G.F."/>
            <person name="Evans P.S."/>
            <person name="Gregor J."/>
            <person name="Kirkpatrick H.A."/>
            <person name="Posfai G."/>
            <person name="Hackett J."/>
            <person name="Klink S."/>
            <person name="Boutin A."/>
            <person name="Shao Y."/>
            <person name="Miller L."/>
            <person name="Grotbeck E.J."/>
            <person name="Davis N.W."/>
            <person name="Lim A."/>
            <person name="Dimalanta E.T."/>
            <person name="Potamousis K."/>
            <person name="Apodaca J."/>
            <person name="Anantharaman T.S."/>
            <person name="Lin J."/>
            <person name="Yen G."/>
            <person name="Schwartz D.C."/>
            <person name="Welch R.A."/>
            <person name="Blattner F.R."/>
        </authorList>
    </citation>
    <scope>NUCLEOTIDE SEQUENCE [LARGE SCALE GENOMIC DNA]</scope>
    <source>
        <strain>O157:H7 / EDL933 / ATCC 700927 / EHEC</strain>
    </source>
</reference>
<reference key="2">
    <citation type="journal article" date="2001" name="DNA Res.">
        <title>Complete genome sequence of enterohemorrhagic Escherichia coli O157:H7 and genomic comparison with a laboratory strain K-12.</title>
        <authorList>
            <person name="Hayashi T."/>
            <person name="Makino K."/>
            <person name="Ohnishi M."/>
            <person name="Kurokawa K."/>
            <person name="Ishii K."/>
            <person name="Yokoyama K."/>
            <person name="Han C.-G."/>
            <person name="Ohtsubo E."/>
            <person name="Nakayama K."/>
            <person name="Murata T."/>
            <person name="Tanaka M."/>
            <person name="Tobe T."/>
            <person name="Iida T."/>
            <person name="Takami H."/>
            <person name="Honda T."/>
            <person name="Sasakawa C."/>
            <person name="Ogasawara N."/>
            <person name="Yasunaga T."/>
            <person name="Kuhara S."/>
            <person name="Shiba T."/>
            <person name="Hattori M."/>
            <person name="Shinagawa H."/>
        </authorList>
    </citation>
    <scope>NUCLEOTIDE SEQUENCE [LARGE SCALE GENOMIC DNA]</scope>
    <source>
        <strain>O157:H7 / Sakai / RIMD 0509952 / EHEC</strain>
    </source>
</reference>
<evidence type="ECO:0000255" key="1">
    <source>
        <dbReference type="HAMAP-Rule" id="MF_00578"/>
    </source>
</evidence>
<keyword id="KW-0067">ATP-binding</keyword>
<keyword id="KW-0317">Glutathione biosynthesis</keyword>
<keyword id="KW-0436">Ligase</keyword>
<keyword id="KW-0547">Nucleotide-binding</keyword>
<keyword id="KW-1185">Reference proteome</keyword>
<comment type="catalytic activity">
    <reaction evidence="1">
        <text>L-cysteine + L-glutamate + ATP = gamma-L-glutamyl-L-cysteine + ADP + phosphate + H(+)</text>
        <dbReference type="Rhea" id="RHEA:13285"/>
        <dbReference type="ChEBI" id="CHEBI:15378"/>
        <dbReference type="ChEBI" id="CHEBI:29985"/>
        <dbReference type="ChEBI" id="CHEBI:30616"/>
        <dbReference type="ChEBI" id="CHEBI:35235"/>
        <dbReference type="ChEBI" id="CHEBI:43474"/>
        <dbReference type="ChEBI" id="CHEBI:58173"/>
        <dbReference type="ChEBI" id="CHEBI:456216"/>
        <dbReference type="EC" id="6.3.2.2"/>
    </reaction>
</comment>
<comment type="pathway">
    <text evidence="1">Sulfur metabolism; glutathione biosynthesis; glutathione from L-cysteine and L-glutamate: step 1/2.</text>
</comment>
<comment type="similarity">
    <text evidence="1">Belongs to the glutamate--cysteine ligase type 1 family. Type 1 subfamily.</text>
</comment>
<gene>
    <name evidence="1" type="primary">gshA</name>
    <name type="ordered locus">Z3989</name>
    <name type="ordered locus">ECs3550</name>
</gene>
<dbReference type="EC" id="6.3.2.2" evidence="1"/>
<dbReference type="EMBL" id="AE005174">
    <property type="protein sequence ID" value="AAG57797.1"/>
    <property type="molecule type" value="Genomic_DNA"/>
</dbReference>
<dbReference type="EMBL" id="BA000007">
    <property type="protein sequence ID" value="BAB36973.1"/>
    <property type="molecule type" value="Genomic_DNA"/>
</dbReference>
<dbReference type="PIR" id="A85917">
    <property type="entry name" value="A85917"/>
</dbReference>
<dbReference type="PIR" id="F91072">
    <property type="entry name" value="F91072"/>
</dbReference>
<dbReference type="RefSeq" id="NP_311577.1">
    <property type="nucleotide sequence ID" value="NC_002695.1"/>
</dbReference>
<dbReference type="RefSeq" id="WP_000611787.1">
    <property type="nucleotide sequence ID" value="NZ_VOAI01000003.1"/>
</dbReference>
<dbReference type="SMR" id="Q8X900"/>
<dbReference type="STRING" id="155864.Z3989"/>
<dbReference type="GeneID" id="914733"/>
<dbReference type="KEGG" id="ece:Z3989"/>
<dbReference type="KEGG" id="ecs:ECs_3550"/>
<dbReference type="PATRIC" id="fig|386585.9.peg.3706"/>
<dbReference type="eggNOG" id="COG2918">
    <property type="taxonomic scope" value="Bacteria"/>
</dbReference>
<dbReference type="HOGENOM" id="CLU_020728_3_0_6"/>
<dbReference type="OMA" id="TRKNWNR"/>
<dbReference type="SABIO-RK" id="Q8X900"/>
<dbReference type="UniPathway" id="UPA00142">
    <property type="reaction ID" value="UER00209"/>
</dbReference>
<dbReference type="Proteomes" id="UP000000558">
    <property type="component" value="Chromosome"/>
</dbReference>
<dbReference type="Proteomes" id="UP000002519">
    <property type="component" value="Chromosome"/>
</dbReference>
<dbReference type="GO" id="GO:0005829">
    <property type="term" value="C:cytosol"/>
    <property type="evidence" value="ECO:0007669"/>
    <property type="project" value="TreeGrafter"/>
</dbReference>
<dbReference type="GO" id="GO:0005524">
    <property type="term" value="F:ATP binding"/>
    <property type="evidence" value="ECO:0007669"/>
    <property type="project" value="UniProtKB-KW"/>
</dbReference>
<dbReference type="GO" id="GO:0004357">
    <property type="term" value="F:glutamate-cysteine ligase activity"/>
    <property type="evidence" value="ECO:0007669"/>
    <property type="project" value="UniProtKB-UniRule"/>
</dbReference>
<dbReference type="GO" id="GO:0046872">
    <property type="term" value="F:metal ion binding"/>
    <property type="evidence" value="ECO:0007669"/>
    <property type="project" value="TreeGrafter"/>
</dbReference>
<dbReference type="GO" id="GO:0006750">
    <property type="term" value="P:glutathione biosynthetic process"/>
    <property type="evidence" value="ECO:0007669"/>
    <property type="project" value="UniProtKB-UniRule"/>
</dbReference>
<dbReference type="FunFam" id="3.30.590.20:FF:000001">
    <property type="entry name" value="Glutamate--cysteine ligase"/>
    <property type="match status" value="1"/>
</dbReference>
<dbReference type="Gene3D" id="3.30.590.20">
    <property type="match status" value="1"/>
</dbReference>
<dbReference type="HAMAP" id="MF_00578">
    <property type="entry name" value="Glu_cys_ligase"/>
    <property type="match status" value="1"/>
</dbReference>
<dbReference type="InterPro" id="IPR014746">
    <property type="entry name" value="Gln_synth/guanido_kin_cat_dom"/>
</dbReference>
<dbReference type="InterPro" id="IPR007370">
    <property type="entry name" value="Glu_cys_ligase"/>
</dbReference>
<dbReference type="InterPro" id="IPR006334">
    <property type="entry name" value="Glut_cys_ligase"/>
</dbReference>
<dbReference type="NCBIfam" id="TIGR01434">
    <property type="entry name" value="glu_cys_ligase"/>
    <property type="match status" value="1"/>
</dbReference>
<dbReference type="PANTHER" id="PTHR38761">
    <property type="entry name" value="GLUTAMATE--CYSTEINE LIGASE"/>
    <property type="match status" value="1"/>
</dbReference>
<dbReference type="PANTHER" id="PTHR38761:SF1">
    <property type="entry name" value="GLUTAMATE--CYSTEINE LIGASE"/>
    <property type="match status" value="1"/>
</dbReference>
<dbReference type="Pfam" id="PF04262">
    <property type="entry name" value="Glu_cys_ligase"/>
    <property type="match status" value="1"/>
</dbReference>
<dbReference type="SUPFAM" id="SSF55931">
    <property type="entry name" value="Glutamine synthetase/guanido kinase"/>
    <property type="match status" value="1"/>
</dbReference>
<protein>
    <recommendedName>
        <fullName evidence="1">Glutamate--cysteine ligase</fullName>
        <ecNumber evidence="1">6.3.2.2</ecNumber>
    </recommendedName>
    <alternativeName>
        <fullName evidence="1">Gamma-ECS</fullName>
        <shortName evidence="1">GCS</shortName>
    </alternativeName>
    <alternativeName>
        <fullName evidence="1">Gamma-glutamylcysteine synthetase</fullName>
    </alternativeName>
</protein>